<gene>
    <name evidence="1" type="primary">pyrE</name>
    <name type="ordered locus">ACIAD3525</name>
</gene>
<comment type="function">
    <text evidence="1">Catalyzes the transfer of a ribosyl phosphate group from 5-phosphoribose 1-diphosphate to orotate, leading to the formation of orotidine monophosphate (OMP).</text>
</comment>
<comment type="catalytic activity">
    <reaction evidence="1">
        <text>orotidine 5'-phosphate + diphosphate = orotate + 5-phospho-alpha-D-ribose 1-diphosphate</text>
        <dbReference type="Rhea" id="RHEA:10380"/>
        <dbReference type="ChEBI" id="CHEBI:30839"/>
        <dbReference type="ChEBI" id="CHEBI:33019"/>
        <dbReference type="ChEBI" id="CHEBI:57538"/>
        <dbReference type="ChEBI" id="CHEBI:58017"/>
        <dbReference type="EC" id="2.4.2.10"/>
    </reaction>
</comment>
<comment type="cofactor">
    <cofactor evidence="1">
        <name>Mg(2+)</name>
        <dbReference type="ChEBI" id="CHEBI:18420"/>
    </cofactor>
</comment>
<comment type="pathway">
    <text evidence="1">Pyrimidine metabolism; UMP biosynthesis via de novo pathway; UMP from orotate: step 1/2.</text>
</comment>
<comment type="subunit">
    <text evidence="1">Homodimer.</text>
</comment>
<comment type="similarity">
    <text evidence="1">Belongs to the purine/pyrimidine phosphoribosyltransferase family. PyrE subfamily.</text>
</comment>
<comment type="sequence caution" evidence="2">
    <conflict type="erroneous initiation">
        <sequence resource="EMBL-CDS" id="CAG70169"/>
    </conflict>
</comment>
<dbReference type="EC" id="2.4.2.10" evidence="1"/>
<dbReference type="EMBL" id="CR543861">
    <property type="protein sequence ID" value="CAG70169.1"/>
    <property type="status" value="ALT_INIT"/>
    <property type="molecule type" value="Genomic_DNA"/>
</dbReference>
<dbReference type="RefSeq" id="WP_004923310.1">
    <property type="nucleotide sequence ID" value="NC_005966.1"/>
</dbReference>
<dbReference type="SMR" id="Q6F6Z6"/>
<dbReference type="STRING" id="202950.GCA_001485005_01687"/>
<dbReference type="GeneID" id="45235702"/>
<dbReference type="KEGG" id="aci:ACIAD3525"/>
<dbReference type="eggNOG" id="COG0461">
    <property type="taxonomic scope" value="Bacteria"/>
</dbReference>
<dbReference type="HOGENOM" id="CLU_074878_0_1_6"/>
<dbReference type="OrthoDB" id="9779060at2"/>
<dbReference type="BioCyc" id="ASP62977:ACIAD_RS15940-MONOMER"/>
<dbReference type="UniPathway" id="UPA00070">
    <property type="reaction ID" value="UER00119"/>
</dbReference>
<dbReference type="Proteomes" id="UP000000430">
    <property type="component" value="Chromosome"/>
</dbReference>
<dbReference type="GO" id="GO:0005737">
    <property type="term" value="C:cytoplasm"/>
    <property type="evidence" value="ECO:0007669"/>
    <property type="project" value="TreeGrafter"/>
</dbReference>
<dbReference type="GO" id="GO:0000287">
    <property type="term" value="F:magnesium ion binding"/>
    <property type="evidence" value="ECO:0007669"/>
    <property type="project" value="UniProtKB-UniRule"/>
</dbReference>
<dbReference type="GO" id="GO:0004588">
    <property type="term" value="F:orotate phosphoribosyltransferase activity"/>
    <property type="evidence" value="ECO:0007669"/>
    <property type="project" value="UniProtKB-UniRule"/>
</dbReference>
<dbReference type="GO" id="GO:0006207">
    <property type="term" value="P:'de novo' pyrimidine nucleobase biosynthetic process"/>
    <property type="evidence" value="ECO:0007669"/>
    <property type="project" value="TreeGrafter"/>
</dbReference>
<dbReference type="GO" id="GO:0044205">
    <property type="term" value="P:'de novo' UMP biosynthetic process"/>
    <property type="evidence" value="ECO:0007669"/>
    <property type="project" value="UniProtKB-UniRule"/>
</dbReference>
<dbReference type="GO" id="GO:0046132">
    <property type="term" value="P:pyrimidine ribonucleoside biosynthetic process"/>
    <property type="evidence" value="ECO:0007669"/>
    <property type="project" value="TreeGrafter"/>
</dbReference>
<dbReference type="CDD" id="cd06223">
    <property type="entry name" value="PRTases_typeI"/>
    <property type="match status" value="1"/>
</dbReference>
<dbReference type="FunFam" id="3.40.50.2020:FF:000008">
    <property type="entry name" value="Orotate phosphoribosyltransferase"/>
    <property type="match status" value="1"/>
</dbReference>
<dbReference type="Gene3D" id="3.40.50.2020">
    <property type="match status" value="1"/>
</dbReference>
<dbReference type="HAMAP" id="MF_01208">
    <property type="entry name" value="PyrE"/>
    <property type="match status" value="1"/>
</dbReference>
<dbReference type="InterPro" id="IPR023031">
    <property type="entry name" value="OPRT"/>
</dbReference>
<dbReference type="InterPro" id="IPR004467">
    <property type="entry name" value="Or_phspho_trans_dom"/>
</dbReference>
<dbReference type="InterPro" id="IPR000836">
    <property type="entry name" value="PRibTrfase_dom"/>
</dbReference>
<dbReference type="InterPro" id="IPR029057">
    <property type="entry name" value="PRTase-like"/>
</dbReference>
<dbReference type="NCBIfam" id="TIGR00336">
    <property type="entry name" value="pyrE"/>
    <property type="match status" value="1"/>
</dbReference>
<dbReference type="PANTHER" id="PTHR46683">
    <property type="entry name" value="OROTATE PHOSPHORIBOSYLTRANSFERASE 1-RELATED"/>
    <property type="match status" value="1"/>
</dbReference>
<dbReference type="PANTHER" id="PTHR46683:SF1">
    <property type="entry name" value="OROTATE PHOSPHORIBOSYLTRANSFERASE 1-RELATED"/>
    <property type="match status" value="1"/>
</dbReference>
<dbReference type="Pfam" id="PF00156">
    <property type="entry name" value="Pribosyltran"/>
    <property type="match status" value="1"/>
</dbReference>
<dbReference type="SUPFAM" id="SSF53271">
    <property type="entry name" value="PRTase-like"/>
    <property type="match status" value="1"/>
</dbReference>
<sequence length="216" mass="23336">MTTPSSFNPQAFIELALSRGVLKFGEFTLKSGRVSPYFFNAGLLNDGEALSLLAQGYADQLMQCQHVDVIFGPAYKGIPFVAATAVALSQLHAKSVPWGFNRKEAKDHGEGGVLVGASVEGKKVWIIDDVITAGTAIREVVTILKNAGATIAGVLVALDRQERGQGQLSAIQEVQQELEIPVHALITMKDLMNYLDAKGETQALAKMEDYRLKYGI</sequence>
<protein>
    <recommendedName>
        <fullName evidence="1">Orotate phosphoribosyltransferase</fullName>
        <shortName evidence="1">OPRT</shortName>
        <shortName evidence="1">OPRTase</shortName>
        <ecNumber evidence="1">2.4.2.10</ecNumber>
    </recommendedName>
</protein>
<organism>
    <name type="scientific">Acinetobacter baylyi (strain ATCC 33305 / BD413 / ADP1)</name>
    <dbReference type="NCBI Taxonomy" id="62977"/>
    <lineage>
        <taxon>Bacteria</taxon>
        <taxon>Pseudomonadati</taxon>
        <taxon>Pseudomonadota</taxon>
        <taxon>Gammaproteobacteria</taxon>
        <taxon>Moraxellales</taxon>
        <taxon>Moraxellaceae</taxon>
        <taxon>Acinetobacter</taxon>
    </lineage>
</organism>
<accession>Q6F6Z6</accession>
<name>PYRE_ACIAD</name>
<feature type="chain" id="PRO_0000110661" description="Orotate phosphoribosyltransferase">
    <location>
        <begin position="1"/>
        <end position="216"/>
    </location>
</feature>
<feature type="binding site" description="in other chain" evidence="1">
    <location>
        <position position="30"/>
    </location>
    <ligand>
        <name>5-phospho-alpha-D-ribose 1-diphosphate</name>
        <dbReference type="ChEBI" id="CHEBI:58017"/>
        <note>ligand shared between dimeric partners</note>
    </ligand>
</feature>
<feature type="binding site" evidence="1">
    <location>
        <begin position="38"/>
        <end position="39"/>
    </location>
    <ligand>
        <name>orotate</name>
        <dbReference type="ChEBI" id="CHEBI:30839"/>
    </ligand>
</feature>
<feature type="binding site" description="in other chain" evidence="1">
    <location>
        <begin position="75"/>
        <end position="76"/>
    </location>
    <ligand>
        <name>5-phospho-alpha-D-ribose 1-diphosphate</name>
        <dbReference type="ChEBI" id="CHEBI:58017"/>
        <note>ligand shared between dimeric partners</note>
    </ligand>
</feature>
<feature type="binding site" evidence="1">
    <location>
        <position position="102"/>
    </location>
    <ligand>
        <name>5-phospho-alpha-D-ribose 1-diphosphate</name>
        <dbReference type="ChEBI" id="CHEBI:58017"/>
        <note>ligand shared between dimeric partners</note>
    </ligand>
</feature>
<feature type="binding site" description="in other chain" evidence="1">
    <location>
        <position position="103"/>
    </location>
    <ligand>
        <name>5-phospho-alpha-D-ribose 1-diphosphate</name>
        <dbReference type="ChEBI" id="CHEBI:58017"/>
        <note>ligand shared between dimeric partners</note>
    </ligand>
</feature>
<feature type="binding site" evidence="1">
    <location>
        <position position="106"/>
    </location>
    <ligand>
        <name>5-phospho-alpha-D-ribose 1-diphosphate</name>
        <dbReference type="ChEBI" id="CHEBI:58017"/>
        <note>ligand shared between dimeric partners</note>
    </ligand>
</feature>
<feature type="binding site" evidence="1">
    <location>
        <position position="108"/>
    </location>
    <ligand>
        <name>5-phospho-alpha-D-ribose 1-diphosphate</name>
        <dbReference type="ChEBI" id="CHEBI:58017"/>
        <note>ligand shared between dimeric partners</note>
    </ligand>
</feature>
<feature type="binding site" description="in other chain" evidence="1">
    <location>
        <begin position="128"/>
        <end position="136"/>
    </location>
    <ligand>
        <name>5-phospho-alpha-D-ribose 1-diphosphate</name>
        <dbReference type="ChEBI" id="CHEBI:58017"/>
        <note>ligand shared between dimeric partners</note>
    </ligand>
</feature>
<feature type="binding site" evidence="1">
    <location>
        <position position="132"/>
    </location>
    <ligand>
        <name>orotate</name>
        <dbReference type="ChEBI" id="CHEBI:30839"/>
    </ligand>
</feature>
<feature type="binding site" evidence="1">
    <location>
        <position position="160"/>
    </location>
    <ligand>
        <name>orotate</name>
        <dbReference type="ChEBI" id="CHEBI:30839"/>
    </ligand>
</feature>
<reference key="1">
    <citation type="journal article" date="2004" name="Nucleic Acids Res.">
        <title>Unique features revealed by the genome sequence of Acinetobacter sp. ADP1, a versatile and naturally transformation competent bacterium.</title>
        <authorList>
            <person name="Barbe V."/>
            <person name="Vallenet D."/>
            <person name="Fonknechten N."/>
            <person name="Kreimeyer A."/>
            <person name="Oztas S."/>
            <person name="Labarre L."/>
            <person name="Cruveiller S."/>
            <person name="Robert C."/>
            <person name="Duprat S."/>
            <person name="Wincker P."/>
            <person name="Ornston L.N."/>
            <person name="Weissenbach J."/>
            <person name="Marliere P."/>
            <person name="Cohen G.N."/>
            <person name="Medigue C."/>
        </authorList>
    </citation>
    <scope>NUCLEOTIDE SEQUENCE [LARGE SCALE GENOMIC DNA]</scope>
    <source>
        <strain>ATCC 33305 / BD413 / ADP1</strain>
    </source>
</reference>
<keyword id="KW-0328">Glycosyltransferase</keyword>
<keyword id="KW-0460">Magnesium</keyword>
<keyword id="KW-0665">Pyrimidine biosynthesis</keyword>
<keyword id="KW-0808">Transferase</keyword>
<proteinExistence type="inferred from homology"/>
<evidence type="ECO:0000255" key="1">
    <source>
        <dbReference type="HAMAP-Rule" id="MF_01208"/>
    </source>
</evidence>
<evidence type="ECO:0000305" key="2"/>